<evidence type="ECO:0000255" key="1">
    <source>
        <dbReference type="HAMAP-Rule" id="MF_00651"/>
    </source>
</evidence>
<gene>
    <name type="ordered locus">BMA10229_A2747</name>
</gene>
<reference key="1">
    <citation type="journal article" date="2010" name="Genome Biol. Evol.">
        <title>Continuing evolution of Burkholderia mallei through genome reduction and large-scale rearrangements.</title>
        <authorList>
            <person name="Losada L."/>
            <person name="Ronning C.M."/>
            <person name="DeShazer D."/>
            <person name="Woods D."/>
            <person name="Fedorova N."/>
            <person name="Kim H.S."/>
            <person name="Shabalina S.A."/>
            <person name="Pearson T.R."/>
            <person name="Brinkac L."/>
            <person name="Tan P."/>
            <person name="Nandi T."/>
            <person name="Crabtree J."/>
            <person name="Badger J."/>
            <person name="Beckstrom-Sternberg S."/>
            <person name="Saqib M."/>
            <person name="Schutzer S.E."/>
            <person name="Keim P."/>
            <person name="Nierman W.C."/>
        </authorList>
    </citation>
    <scope>NUCLEOTIDE SEQUENCE [LARGE SCALE GENOMIC DNA]</scope>
    <source>
        <strain>NCTC 10229</strain>
    </source>
</reference>
<organism>
    <name type="scientific">Burkholderia mallei (strain NCTC 10229)</name>
    <dbReference type="NCBI Taxonomy" id="412022"/>
    <lineage>
        <taxon>Bacteria</taxon>
        <taxon>Pseudomonadati</taxon>
        <taxon>Pseudomonadota</taxon>
        <taxon>Betaproteobacteria</taxon>
        <taxon>Burkholderiales</taxon>
        <taxon>Burkholderiaceae</taxon>
        <taxon>Burkholderia</taxon>
        <taxon>pseudomallei group</taxon>
    </lineage>
</organism>
<feature type="chain" id="PRO_1000061494" description="Putative pre-16S rRNA nuclease">
    <location>
        <begin position="1"/>
        <end position="146"/>
    </location>
</feature>
<comment type="function">
    <text evidence="1">Could be a nuclease involved in processing of the 5'-end of pre-16S rRNA.</text>
</comment>
<comment type="subcellular location">
    <subcellularLocation>
        <location evidence="1">Cytoplasm</location>
    </subcellularLocation>
</comment>
<comment type="similarity">
    <text evidence="1">Belongs to the YqgF nuclease family.</text>
</comment>
<name>YQGF_BURM9</name>
<keyword id="KW-0963">Cytoplasm</keyword>
<keyword id="KW-0378">Hydrolase</keyword>
<keyword id="KW-0540">Nuclease</keyword>
<keyword id="KW-0690">Ribosome biogenesis</keyword>
<protein>
    <recommendedName>
        <fullName evidence="1">Putative pre-16S rRNA nuclease</fullName>
        <ecNumber evidence="1">3.1.-.-</ecNumber>
    </recommendedName>
</protein>
<accession>A2S9T0</accession>
<proteinExistence type="inferred from homology"/>
<dbReference type="EC" id="3.1.-.-" evidence="1"/>
<dbReference type="EMBL" id="CP000546">
    <property type="protein sequence ID" value="ABN02471.1"/>
    <property type="molecule type" value="Genomic_DNA"/>
</dbReference>
<dbReference type="SMR" id="A2S9T0"/>
<dbReference type="KEGG" id="bml:BMA10229_A2747"/>
<dbReference type="HOGENOM" id="CLU_098240_3_2_4"/>
<dbReference type="Proteomes" id="UP000002283">
    <property type="component" value="Chromosome I"/>
</dbReference>
<dbReference type="GO" id="GO:0005829">
    <property type="term" value="C:cytosol"/>
    <property type="evidence" value="ECO:0007669"/>
    <property type="project" value="TreeGrafter"/>
</dbReference>
<dbReference type="GO" id="GO:0004518">
    <property type="term" value="F:nuclease activity"/>
    <property type="evidence" value="ECO:0007669"/>
    <property type="project" value="UniProtKB-KW"/>
</dbReference>
<dbReference type="GO" id="GO:0000967">
    <property type="term" value="P:rRNA 5'-end processing"/>
    <property type="evidence" value="ECO:0007669"/>
    <property type="project" value="UniProtKB-UniRule"/>
</dbReference>
<dbReference type="CDD" id="cd16964">
    <property type="entry name" value="YqgF"/>
    <property type="match status" value="1"/>
</dbReference>
<dbReference type="Gene3D" id="3.30.420.140">
    <property type="entry name" value="YqgF/RNase H-like domain"/>
    <property type="match status" value="1"/>
</dbReference>
<dbReference type="HAMAP" id="MF_00651">
    <property type="entry name" value="Nuclease_YqgF"/>
    <property type="match status" value="1"/>
</dbReference>
<dbReference type="InterPro" id="IPR012337">
    <property type="entry name" value="RNaseH-like_sf"/>
</dbReference>
<dbReference type="InterPro" id="IPR005227">
    <property type="entry name" value="YqgF"/>
</dbReference>
<dbReference type="InterPro" id="IPR006641">
    <property type="entry name" value="YqgF/RNaseH-like_dom"/>
</dbReference>
<dbReference type="InterPro" id="IPR037027">
    <property type="entry name" value="YqgF/RNaseH-like_dom_sf"/>
</dbReference>
<dbReference type="NCBIfam" id="TIGR00250">
    <property type="entry name" value="RNAse_H_YqgF"/>
    <property type="match status" value="1"/>
</dbReference>
<dbReference type="PANTHER" id="PTHR33317">
    <property type="entry name" value="POLYNUCLEOTIDYL TRANSFERASE, RIBONUCLEASE H-LIKE SUPERFAMILY PROTEIN"/>
    <property type="match status" value="1"/>
</dbReference>
<dbReference type="PANTHER" id="PTHR33317:SF4">
    <property type="entry name" value="POLYNUCLEOTIDYL TRANSFERASE, RIBONUCLEASE H-LIKE SUPERFAMILY PROTEIN"/>
    <property type="match status" value="1"/>
</dbReference>
<dbReference type="Pfam" id="PF03652">
    <property type="entry name" value="RuvX"/>
    <property type="match status" value="1"/>
</dbReference>
<dbReference type="SMART" id="SM00732">
    <property type="entry name" value="YqgFc"/>
    <property type="match status" value="1"/>
</dbReference>
<dbReference type="SUPFAM" id="SSF53098">
    <property type="entry name" value="Ribonuclease H-like"/>
    <property type="match status" value="1"/>
</dbReference>
<sequence>MSAALSRDATLLAFDYGEKRIGVAVGNLLTRTARALVIVRNLNREHRFKAVGELIAEWKPDALVVGLPLHPDGAPHEMTQRAMRFGNQLNGRFNLPVSWVDERYSSVEARAGLRARGDAADRVDAEAARVILQQYLDGLPDHHEFN</sequence>